<accession>A1KIJ9</accession>
<proteinExistence type="evidence at protein level"/>
<dbReference type="EMBL" id="AM408590">
    <property type="protein sequence ID" value="CAL71458.1"/>
    <property type="molecule type" value="Genomic_DNA"/>
</dbReference>
<dbReference type="RefSeq" id="WP_003407310.1">
    <property type="nucleotide sequence ID" value="NC_008769.1"/>
</dbReference>
<dbReference type="SMR" id="A1KIJ9"/>
<dbReference type="KEGG" id="mbb:BCG_1471c"/>
<dbReference type="HOGENOM" id="CLU_000960_2_5_11"/>
<dbReference type="Proteomes" id="UP000001472">
    <property type="component" value="Chromosome"/>
</dbReference>
<dbReference type="GO" id="GO:0005886">
    <property type="term" value="C:plasma membrane"/>
    <property type="evidence" value="ECO:0007669"/>
    <property type="project" value="UniProtKB-SubCell"/>
</dbReference>
<dbReference type="GO" id="GO:0022857">
    <property type="term" value="F:transmembrane transporter activity"/>
    <property type="evidence" value="ECO:0007669"/>
    <property type="project" value="InterPro"/>
</dbReference>
<dbReference type="GO" id="GO:0046677">
    <property type="term" value="P:response to antibiotic"/>
    <property type="evidence" value="ECO:0007669"/>
    <property type="project" value="UniProtKB-KW"/>
</dbReference>
<dbReference type="CDD" id="cd17321">
    <property type="entry name" value="MFS_MMR_MDR_like"/>
    <property type="match status" value="1"/>
</dbReference>
<dbReference type="FunFam" id="1.20.1720.10:FF:000020">
    <property type="entry name" value="Probable triacylglyceride transporter BCG_1471c"/>
    <property type="match status" value="1"/>
</dbReference>
<dbReference type="Gene3D" id="1.20.1250.20">
    <property type="entry name" value="MFS general substrate transporter like domains"/>
    <property type="match status" value="1"/>
</dbReference>
<dbReference type="Gene3D" id="1.20.1720.10">
    <property type="entry name" value="Multidrug resistance protein D"/>
    <property type="match status" value="1"/>
</dbReference>
<dbReference type="InterPro" id="IPR011701">
    <property type="entry name" value="MFS"/>
</dbReference>
<dbReference type="InterPro" id="IPR020846">
    <property type="entry name" value="MFS_dom"/>
</dbReference>
<dbReference type="InterPro" id="IPR036259">
    <property type="entry name" value="MFS_trans_sf"/>
</dbReference>
<dbReference type="InterPro" id="IPR005829">
    <property type="entry name" value="Sugar_transporter_CS"/>
</dbReference>
<dbReference type="PANTHER" id="PTHR23501">
    <property type="entry name" value="MAJOR FACILITATOR SUPERFAMILY"/>
    <property type="match status" value="1"/>
</dbReference>
<dbReference type="PANTHER" id="PTHR23501:SF191">
    <property type="entry name" value="VACUOLAR BASIC AMINO ACID TRANSPORTER 4"/>
    <property type="match status" value="1"/>
</dbReference>
<dbReference type="Pfam" id="PF07690">
    <property type="entry name" value="MFS_1"/>
    <property type="match status" value="1"/>
</dbReference>
<dbReference type="SUPFAM" id="SSF103473">
    <property type="entry name" value="MFS general substrate transporter"/>
    <property type="match status" value="1"/>
</dbReference>
<dbReference type="PROSITE" id="PS50850">
    <property type="entry name" value="MFS"/>
    <property type="match status" value="1"/>
</dbReference>
<organism>
    <name type="scientific">Mycobacterium bovis (strain BCG / Pasteur 1173P2)</name>
    <dbReference type="NCBI Taxonomy" id="410289"/>
    <lineage>
        <taxon>Bacteria</taxon>
        <taxon>Bacillati</taxon>
        <taxon>Actinomycetota</taxon>
        <taxon>Actinomycetes</taxon>
        <taxon>Mycobacteriales</taxon>
        <taxon>Mycobacteriaceae</taxon>
        <taxon>Mycobacterium</taxon>
        <taxon>Mycobacterium tuberculosis complex</taxon>
    </lineage>
</organism>
<feature type="chain" id="PRO_0000391004" description="Probable triacylglyceride transporter BCG_1471c">
    <location>
        <begin position="1"/>
        <end position="518"/>
    </location>
</feature>
<feature type="transmembrane region" description="Helical" evidence="3">
    <location>
        <begin position="7"/>
        <end position="27"/>
    </location>
</feature>
<feature type="transmembrane region" description="Helical" evidence="3">
    <location>
        <begin position="46"/>
        <end position="66"/>
    </location>
</feature>
<feature type="transmembrane region" description="Helical" evidence="3">
    <location>
        <begin position="76"/>
        <end position="96"/>
    </location>
</feature>
<feature type="transmembrane region" description="Helical" evidence="3">
    <location>
        <begin position="110"/>
        <end position="130"/>
    </location>
</feature>
<feature type="transmembrane region" description="Helical" evidence="3">
    <location>
        <begin position="144"/>
        <end position="164"/>
    </location>
</feature>
<feature type="transmembrane region" description="Helical" evidence="3">
    <location>
        <begin position="170"/>
        <end position="190"/>
    </location>
</feature>
<feature type="transmembrane region" description="Helical" evidence="3">
    <location>
        <begin position="201"/>
        <end position="221"/>
    </location>
</feature>
<feature type="transmembrane region" description="Helical" evidence="3">
    <location>
        <begin position="230"/>
        <end position="250"/>
    </location>
</feature>
<feature type="transmembrane region" description="Helical" evidence="3">
    <location>
        <begin position="270"/>
        <end position="290"/>
    </location>
</feature>
<feature type="transmembrane region" description="Helical" evidence="3">
    <location>
        <begin position="308"/>
        <end position="328"/>
    </location>
</feature>
<feature type="transmembrane region" description="Helical" evidence="3">
    <location>
        <begin position="337"/>
        <end position="357"/>
    </location>
</feature>
<feature type="transmembrane region" description="Helical" evidence="3">
    <location>
        <begin position="379"/>
        <end position="401"/>
    </location>
</feature>
<feature type="transmembrane region" description="Helical" evidence="3">
    <location>
        <begin position="408"/>
        <end position="428"/>
    </location>
</feature>
<feature type="transmembrane region" description="Helical" evidence="3">
    <location>
        <begin position="475"/>
        <end position="495"/>
    </location>
</feature>
<name>MFS55_MYCBP</name>
<protein>
    <recommendedName>
        <fullName evidence="2">Probable triacylglyceride transporter BCG_1471c</fullName>
    </recommendedName>
    <alternativeName>
        <fullName>MFS-type drug efflux transporter P55</fullName>
    </alternativeName>
</protein>
<evidence type="ECO:0000250" key="1"/>
<evidence type="ECO:0000250" key="2">
    <source>
        <dbReference type="UniProtKB" id="P9WJY3"/>
    </source>
</evidence>
<evidence type="ECO:0000255" key="3"/>
<evidence type="ECO:0000269" key="4">
    <source>
    </source>
</evidence>
<evidence type="ECO:0000269" key="5">
    <source>
    </source>
</evidence>
<evidence type="ECO:0000305" key="6"/>
<keyword id="KW-0046">Antibiotic resistance</keyword>
<keyword id="KW-0997">Cell inner membrane</keyword>
<keyword id="KW-1003">Cell membrane</keyword>
<keyword id="KW-0472">Membrane</keyword>
<keyword id="KW-0812">Transmembrane</keyword>
<keyword id="KW-1133">Transmembrane helix</keyword>
<keyword id="KW-0813">Transport</keyword>
<reference key="1">
    <citation type="journal article" date="2007" name="Proc. Natl. Acad. Sci. U.S.A.">
        <title>Genome plasticity of BCG and impact on vaccine efficacy.</title>
        <authorList>
            <person name="Brosch R."/>
            <person name="Gordon S.V."/>
            <person name="Garnier T."/>
            <person name="Eiglmeier K."/>
            <person name="Frigui W."/>
            <person name="Valenti P."/>
            <person name="Dos Santos S."/>
            <person name="Duthoy S."/>
            <person name="Lacroix C."/>
            <person name="Garcia-Pelayo C."/>
            <person name="Inwald J.K."/>
            <person name="Golby P."/>
            <person name="Garcia J.N."/>
            <person name="Hewinson R.G."/>
            <person name="Behr M.A."/>
            <person name="Quail M.A."/>
            <person name="Churcher C."/>
            <person name="Barrell B.G."/>
            <person name="Parkhill J."/>
            <person name="Cole S.T."/>
        </authorList>
    </citation>
    <scope>NUCLEOTIDE SEQUENCE [LARGE SCALE GENOMIC DNA]</scope>
    <source>
        <strain>BCG / Pasteur 1173P2</strain>
    </source>
</reference>
<reference key="2">
    <citation type="journal article" date="2009" name="Antimicrob. Agents Chemother.">
        <title>Role of the Mycobacterium tuberculosis P55 efflux pump in intrinsic drug resistance, oxidative stress responses, and growth.</title>
        <authorList>
            <person name="Ramon-Garcia S."/>
            <person name="Martin C."/>
            <person name="Thompson C.J."/>
            <person name="Ainsa J.A."/>
        </authorList>
    </citation>
    <scope>FUNCTION IN ANTIBIOTIC RESISTANCE</scope>
    <scope>ACTIVITY REGULATION</scope>
    <scope>DISRUPTION PHENOTYPE</scope>
    <source>
        <strain>BCG / Pasteur 1173</strain>
    </source>
</reference>
<reference key="3">
    <citation type="journal article" date="2015" name="Virulence">
        <title>The mycobacterial P55 efflux pump is required for optimal growth on cholesterol.</title>
        <authorList>
            <person name="Ramon-Garcia S."/>
            <person name="Stewart G.R."/>
            <person name="Hui Z.K."/>
            <person name="Mohn W.W."/>
            <person name="Thompson C.J."/>
        </authorList>
    </citation>
    <scope>FUNCTION</scope>
    <scope>DISRUPTION PHENOTYPE</scope>
    <source>
        <strain>BCG / Pasteur 1173</strain>
    </source>
</reference>
<sequence length="518" mass="54689">MRAGRRVAISAGSLAVLLGALDTYVVVTIMRDIMNSVGIPINQLHRITWIVTMYLLGYIAAMPLLGRASDRFGRKLMLQVSLAGFIIGSVVTALAGHFGDFHMLIAGRTIQGVASGALLPITLALGADLWSQRNRAGVLGGIGAAQELGSVLGPLYGIFIVWLLHDWRDVFWINVPLTAIAMVMIHFSLPSHDRSTEPERVDLVGGLLLALALGLAVIGLYNPNPDGKHVLPDYGAPLLVGALVAAVAFFGWERFARTRLIDPAGVHFRPFLSALGASVAAGAALMVTLVDVELFGQGVLQMDQAQAAGMLLWFLIALPIGAVTGGWIATRAGDRAVAFAGLLIAAYGYWLISHWPVDLLADRHNILGLFTVPAMHTDLVVAGLGLGLVIGPLSSATLRVVPSAQHGIASAAVVVARMTGMLIGVAALSAWGLYRFNQILAGLSAAIPPNASLLERAAAIGARYQQAFALMYGEIFTITAIVCVFGAVLGLLISGRKEHADEPEVQEQPTLAPQVEPL</sequence>
<gene>
    <name type="ordered locus">BCG_1471c</name>
</gene>
<comment type="function">
    <text evidence="2 4 5">In association with lipoprotein LprG probably transports triacylglycerides (TAG) across the inner cell membrane into the periplasm; TAG probably regulates lipid metabolism and growth regulation (By similarity). Confers resistance to several drugs such as rifampicin, clofazimine and novobiocin; is also part of the oxidative stress response and is needed to maintain normal growth characteristics (PubMed:19564371). Probably an efflux transporter, involved in maintaining correct cell wall permeability. Probably required with LprG for normal surface localization of lipoarabinomannan (LAM) (By similarity). Required for optimal growth on cholesterol (PubMed:26155739).</text>
</comment>
<comment type="activity regulation">
    <text evidence="4">Inhibited by CCCP and valinomycin.</text>
</comment>
<comment type="subcellular location">
    <subcellularLocation>
        <location evidence="1">Cell inner membrane</location>
        <topology evidence="1">Multi-pass membrane protein</topology>
    </subcellularLocation>
</comment>
<comment type="disruption phenotype">
    <text evidence="4 5">Increased susceptibility to a number of antibiotics such as rifampicin, clofazimine, novobiocin, ethambutol and vancomycin; grows slowly in liquid culture and forms small colonies (PubMed:19564371). Severely reduced growth with cholesterol as the sole carbon source; lag phase is very long and grows much slower (PubMed:26155739). Accumulates less intracellular cholesterol (PubMed:26155739).</text>
</comment>
<comment type="miscellaneous">
    <text evidence="6">Bacterial LAM blocks host cell phagosome-lysosome fusion and is one way in which Mycobacteria evade the host immune system.</text>
</comment>
<comment type="miscellaneous">
    <text evidence="6">Triacylglycerides accumulate in lipid droplets in the cytoplasm of M.tuberculosis stationary phase and dormant bacteria, and are used as an energy source during starvation.</text>
</comment>
<comment type="similarity">
    <text evidence="6">Belongs to the major facilitator superfamily.</text>
</comment>